<evidence type="ECO:0000250" key="1"/>
<evidence type="ECO:0000250" key="2">
    <source>
        <dbReference type="UniProtKB" id="Q92918"/>
    </source>
</evidence>
<evidence type="ECO:0000255" key="3">
    <source>
        <dbReference type="PROSITE-ProRule" id="PRU00159"/>
    </source>
</evidence>
<evidence type="ECO:0000255" key="4">
    <source>
        <dbReference type="PROSITE-ProRule" id="PRU00795"/>
    </source>
</evidence>
<evidence type="ECO:0000256" key="5">
    <source>
        <dbReference type="SAM" id="MobiDB-lite"/>
    </source>
</evidence>
<evidence type="ECO:0000269" key="6">
    <source>
    </source>
</evidence>
<evidence type="ECO:0000269" key="7">
    <source>
    </source>
</evidence>
<evidence type="ECO:0000305" key="8"/>
<evidence type="ECO:0000312" key="9">
    <source>
        <dbReference type="EMBL" id="CAA70213.1"/>
    </source>
</evidence>
<evidence type="ECO:0007744" key="10">
    <source>
    </source>
</evidence>
<evidence type="ECO:0007829" key="11">
    <source>
        <dbReference type="PDB" id="1UTI"/>
    </source>
</evidence>
<name>M4K1_MOUSE</name>
<accession>P70218</accession>
<accession>Q8R3R0</accession>
<accession>Q99K62</accession>
<dbReference type="EC" id="2.7.11.1" evidence="6 7"/>
<dbReference type="EMBL" id="Y09010">
    <property type="protein sequence ID" value="CAA70213.1"/>
    <property type="molecule type" value="mRNA"/>
</dbReference>
<dbReference type="EMBL" id="BC005433">
    <property type="protein sequence ID" value="AAH05433.1"/>
    <property type="status" value="ALT_SEQ"/>
    <property type="molecule type" value="mRNA"/>
</dbReference>
<dbReference type="EMBL" id="BC024832">
    <property type="protein sequence ID" value="AAH24832.1"/>
    <property type="molecule type" value="mRNA"/>
</dbReference>
<dbReference type="CCDS" id="CCDS39865.1"/>
<dbReference type="RefSeq" id="NP_032305.2">
    <property type="nucleotide sequence ID" value="NM_008279.3"/>
</dbReference>
<dbReference type="PDB" id="1UTI">
    <property type="method" value="X-ray"/>
    <property type="resolution" value="1.50 A"/>
    <property type="chains" value="D=465-480"/>
</dbReference>
<dbReference type="PDBsum" id="1UTI"/>
<dbReference type="SMR" id="P70218"/>
<dbReference type="BioGRID" id="204964">
    <property type="interactions" value="6"/>
</dbReference>
<dbReference type="DIP" id="DIP-42073N"/>
<dbReference type="FunCoup" id="P70218">
    <property type="interactions" value="583"/>
</dbReference>
<dbReference type="IntAct" id="P70218">
    <property type="interactions" value="7"/>
</dbReference>
<dbReference type="MINT" id="P70218"/>
<dbReference type="STRING" id="10090.ENSMUSP00000082995"/>
<dbReference type="BindingDB" id="P70218"/>
<dbReference type="ChEMBL" id="CHEMBL5465296"/>
<dbReference type="GlyGen" id="P70218">
    <property type="glycosylation" value="1 site, 1 O-linked glycan (1 site)"/>
</dbReference>
<dbReference type="iPTMnet" id="P70218"/>
<dbReference type="PhosphoSitePlus" id="P70218"/>
<dbReference type="jPOST" id="P70218"/>
<dbReference type="PaxDb" id="10090-ENSMUSP00000082995"/>
<dbReference type="PeptideAtlas" id="P70218"/>
<dbReference type="ProteomicsDB" id="291987"/>
<dbReference type="Antibodypedia" id="2067">
    <property type="antibodies" value="565 antibodies from 39 providers"/>
</dbReference>
<dbReference type="DNASU" id="26411"/>
<dbReference type="Ensembl" id="ENSMUST00000085835.8">
    <property type="protein sequence ID" value="ENSMUSP00000082995.7"/>
    <property type="gene ID" value="ENSMUSG00000037337.12"/>
</dbReference>
<dbReference type="GeneID" id="26411"/>
<dbReference type="KEGG" id="mmu:26411"/>
<dbReference type="UCSC" id="uc009gam.1">
    <property type="organism name" value="mouse"/>
</dbReference>
<dbReference type="AGR" id="MGI:1346882"/>
<dbReference type="CTD" id="11184"/>
<dbReference type="MGI" id="MGI:1346882">
    <property type="gene designation" value="Map4k1"/>
</dbReference>
<dbReference type="VEuPathDB" id="HostDB:ENSMUSG00000037337"/>
<dbReference type="eggNOG" id="KOG0576">
    <property type="taxonomic scope" value="Eukaryota"/>
</dbReference>
<dbReference type="GeneTree" id="ENSGT00940000160308"/>
<dbReference type="HOGENOM" id="CLU_006347_1_1_1"/>
<dbReference type="InParanoid" id="P70218"/>
<dbReference type="OMA" id="IQVFWKH"/>
<dbReference type="OrthoDB" id="8693905at2759"/>
<dbReference type="PhylomeDB" id="P70218"/>
<dbReference type="TreeFam" id="TF105121"/>
<dbReference type="BioGRID-ORCS" id="26411">
    <property type="hits" value="1 hit in 79 CRISPR screens"/>
</dbReference>
<dbReference type="ChiTaRS" id="Map4k1">
    <property type="organism name" value="mouse"/>
</dbReference>
<dbReference type="PRO" id="PR:P70218"/>
<dbReference type="Proteomes" id="UP000000589">
    <property type="component" value="Chromosome 7"/>
</dbReference>
<dbReference type="RNAct" id="P70218">
    <property type="molecule type" value="protein"/>
</dbReference>
<dbReference type="Bgee" id="ENSMUSG00000037337">
    <property type="expression patterns" value="Expressed in mesenteric lymph node and 117 other cell types or tissues"/>
</dbReference>
<dbReference type="ExpressionAtlas" id="P70218">
    <property type="expression patterns" value="baseline and differential"/>
</dbReference>
<dbReference type="GO" id="GO:0005524">
    <property type="term" value="F:ATP binding"/>
    <property type="evidence" value="ECO:0000314"/>
    <property type="project" value="UniProtKB"/>
</dbReference>
<dbReference type="GO" id="GO:0008349">
    <property type="term" value="F:MAP kinase kinase kinase kinase activity"/>
    <property type="evidence" value="ECO:0007669"/>
    <property type="project" value="Ensembl"/>
</dbReference>
<dbReference type="GO" id="GO:0106310">
    <property type="term" value="F:protein serine kinase activity"/>
    <property type="evidence" value="ECO:0007669"/>
    <property type="project" value="RHEA"/>
</dbReference>
<dbReference type="GO" id="GO:0004674">
    <property type="term" value="F:protein serine/threonine kinase activity"/>
    <property type="evidence" value="ECO:0000314"/>
    <property type="project" value="UniProtKB"/>
</dbReference>
<dbReference type="GO" id="GO:0008283">
    <property type="term" value="P:cell population proliferation"/>
    <property type="evidence" value="ECO:0000250"/>
    <property type="project" value="UniProtKB"/>
</dbReference>
<dbReference type="GO" id="GO:1904628">
    <property type="term" value="P:cellular response to phorbol 13-acetate 12-myristate"/>
    <property type="evidence" value="ECO:0007669"/>
    <property type="project" value="Ensembl"/>
</dbReference>
<dbReference type="GO" id="GO:0035556">
    <property type="term" value="P:intracellular signal transduction"/>
    <property type="evidence" value="ECO:0000314"/>
    <property type="project" value="UniProtKB"/>
</dbReference>
<dbReference type="GO" id="GO:0007254">
    <property type="term" value="P:JNK cascade"/>
    <property type="evidence" value="ECO:0007669"/>
    <property type="project" value="Ensembl"/>
</dbReference>
<dbReference type="GO" id="GO:0018105">
    <property type="term" value="P:peptidyl-serine phosphorylation"/>
    <property type="evidence" value="ECO:0000250"/>
    <property type="project" value="UniProtKB"/>
</dbReference>
<dbReference type="GO" id="GO:0043410">
    <property type="term" value="P:positive regulation of MAPK cascade"/>
    <property type="evidence" value="ECO:0007669"/>
    <property type="project" value="Ensembl"/>
</dbReference>
<dbReference type="GO" id="GO:0046777">
    <property type="term" value="P:protein autophosphorylation"/>
    <property type="evidence" value="ECO:0000250"/>
    <property type="project" value="UniProtKB"/>
</dbReference>
<dbReference type="GO" id="GO:0006468">
    <property type="term" value="P:protein phosphorylation"/>
    <property type="evidence" value="ECO:0000314"/>
    <property type="project" value="UniProtKB"/>
</dbReference>
<dbReference type="CDD" id="cd06613">
    <property type="entry name" value="STKc_MAP4K3_like"/>
    <property type="match status" value="1"/>
</dbReference>
<dbReference type="FunFam" id="1.10.510.10:FF:000031">
    <property type="entry name" value="Mitogen-activated protein kinase kinase kinase kinase"/>
    <property type="match status" value="1"/>
</dbReference>
<dbReference type="Gene3D" id="1.10.510.10">
    <property type="entry name" value="Transferase(Phosphotransferase) domain 1"/>
    <property type="match status" value="1"/>
</dbReference>
<dbReference type="IDEAL" id="IID50083"/>
<dbReference type="InterPro" id="IPR001180">
    <property type="entry name" value="CNH_dom"/>
</dbReference>
<dbReference type="InterPro" id="IPR011009">
    <property type="entry name" value="Kinase-like_dom_sf"/>
</dbReference>
<dbReference type="InterPro" id="IPR021160">
    <property type="entry name" value="MAPKKKK"/>
</dbReference>
<dbReference type="InterPro" id="IPR000719">
    <property type="entry name" value="Prot_kinase_dom"/>
</dbReference>
<dbReference type="InterPro" id="IPR017441">
    <property type="entry name" value="Protein_kinase_ATP_BS"/>
</dbReference>
<dbReference type="InterPro" id="IPR050629">
    <property type="entry name" value="STE20/SPS1-PAK"/>
</dbReference>
<dbReference type="PANTHER" id="PTHR48012:SF15">
    <property type="entry name" value="MITOGEN-ACTIVATED PROTEIN KINASE KINASE KINASE KINASE 1"/>
    <property type="match status" value="1"/>
</dbReference>
<dbReference type="PANTHER" id="PTHR48012">
    <property type="entry name" value="STERILE20-LIKE KINASE, ISOFORM B-RELATED"/>
    <property type="match status" value="1"/>
</dbReference>
<dbReference type="Pfam" id="PF00780">
    <property type="entry name" value="CNH"/>
    <property type="match status" value="1"/>
</dbReference>
<dbReference type="Pfam" id="PF00069">
    <property type="entry name" value="Pkinase"/>
    <property type="match status" value="1"/>
</dbReference>
<dbReference type="PIRSF" id="PIRSF038172">
    <property type="entry name" value="MAPKKKK"/>
    <property type="match status" value="1"/>
</dbReference>
<dbReference type="SMART" id="SM00036">
    <property type="entry name" value="CNH"/>
    <property type="match status" value="1"/>
</dbReference>
<dbReference type="SMART" id="SM00220">
    <property type="entry name" value="S_TKc"/>
    <property type="match status" value="1"/>
</dbReference>
<dbReference type="SUPFAM" id="SSF56112">
    <property type="entry name" value="Protein kinase-like (PK-like)"/>
    <property type="match status" value="1"/>
</dbReference>
<dbReference type="PROSITE" id="PS50219">
    <property type="entry name" value="CNH"/>
    <property type="match status" value="1"/>
</dbReference>
<dbReference type="PROSITE" id="PS00107">
    <property type="entry name" value="PROTEIN_KINASE_ATP"/>
    <property type="match status" value="1"/>
</dbReference>
<dbReference type="PROSITE" id="PS50011">
    <property type="entry name" value="PROTEIN_KINASE_DOM"/>
    <property type="match status" value="1"/>
</dbReference>
<protein>
    <recommendedName>
        <fullName>Mitogen-activated protein kinase kinase kinase kinase 1</fullName>
        <ecNumber evidence="6 7">2.7.11.1</ecNumber>
    </recommendedName>
    <alternativeName>
        <fullName>Hematopoietic progenitor kinase</fullName>
        <shortName>HPK</shortName>
    </alternativeName>
    <alternativeName>
        <fullName>MAPK/ERK kinase kinase kinase 1</fullName>
        <shortName>MEK kinase kinase 1</shortName>
        <shortName>MEKKK 1</shortName>
    </alternativeName>
</protein>
<feature type="chain" id="PRO_0000086274" description="Mitogen-activated protein kinase kinase kinase kinase 1">
    <location>
        <begin position="1"/>
        <end position="827"/>
    </location>
</feature>
<feature type="domain" description="Protein kinase" evidence="3">
    <location>
        <begin position="17"/>
        <end position="274"/>
    </location>
</feature>
<feature type="domain" description="CNH" evidence="4">
    <location>
        <begin position="501"/>
        <end position="806"/>
    </location>
</feature>
<feature type="region of interest" description="Disordered" evidence="5">
    <location>
        <begin position="296"/>
        <end position="315"/>
    </location>
</feature>
<feature type="region of interest" description="Disordered" evidence="5">
    <location>
        <begin position="359"/>
        <end position="485"/>
    </location>
</feature>
<feature type="compositionally biased region" description="Acidic residues" evidence="5">
    <location>
        <begin position="374"/>
        <end position="383"/>
    </location>
</feature>
<feature type="compositionally biased region" description="Pro residues" evidence="5">
    <location>
        <begin position="429"/>
        <end position="443"/>
    </location>
</feature>
<feature type="compositionally biased region" description="Pro residues" evidence="5">
    <location>
        <begin position="461"/>
        <end position="471"/>
    </location>
</feature>
<feature type="compositionally biased region" description="Basic and acidic residues" evidence="5">
    <location>
        <begin position="472"/>
        <end position="485"/>
    </location>
</feature>
<feature type="active site" description="Proton acceptor" evidence="3">
    <location>
        <position position="137"/>
    </location>
</feature>
<feature type="binding site" evidence="3">
    <location>
        <begin position="23"/>
        <end position="31"/>
    </location>
    <ligand>
        <name>ATP</name>
        <dbReference type="ChEBI" id="CHEBI:30616"/>
    </ligand>
</feature>
<feature type="binding site" evidence="3 7">
    <location>
        <position position="46"/>
    </location>
    <ligand>
        <name>ATP</name>
        <dbReference type="ChEBI" id="CHEBI:30616"/>
    </ligand>
</feature>
<feature type="modified residue" description="Phosphothreonine; by autocatalysis" evidence="2">
    <location>
        <position position="165"/>
    </location>
</feature>
<feature type="modified residue" description="Phosphoserine; by autocatalysis" evidence="2">
    <location>
        <position position="171"/>
    </location>
</feature>
<feature type="modified residue" description="Phosphothreonine; by autocatalysis" evidence="2">
    <location>
        <position position="175"/>
    </location>
</feature>
<feature type="modified residue" description="Phosphothreonine; by autocatalysis" evidence="2">
    <location>
        <position position="354"/>
    </location>
</feature>
<feature type="modified residue" description="Phosphoserine" evidence="10">
    <location>
        <position position="373"/>
    </location>
</feature>
<feature type="modified residue" description="Phosphoserine" evidence="10">
    <location>
        <position position="375"/>
    </location>
</feature>
<feature type="modified residue" description="Phosphoserine" evidence="2">
    <location>
        <position position="403"/>
    </location>
</feature>
<feature type="modified residue" description="Phosphoserine" evidence="2">
    <location>
        <position position="405"/>
    </location>
</feature>
<feature type="modified residue" description="Phosphoserine" evidence="10">
    <location>
        <position position="419"/>
    </location>
</feature>
<feature type="modified residue" description="Phosphoserine" evidence="2">
    <location>
        <position position="592"/>
    </location>
</feature>
<feature type="mutagenesis site" description="Loss of kinase activity and ability to activate JNK family. Inhibits the ability of CLNK to up-regulate CD3-triggered activation of the IL2 promoter." evidence="7">
    <original>K</original>
    <variation>E</variation>
    <location>
        <position position="46"/>
    </location>
</feature>
<feature type="sequence conflict" description="In Ref. 2; AAH24832." evidence="8" ref="2">
    <original>G</original>
    <variation>V</variation>
    <location>
        <position position="411"/>
    </location>
</feature>
<feature type="sequence conflict" description="In Ref. 2; AAH05433/AAH24832." evidence="8" ref="2">
    <original>C</original>
    <variation>R</variation>
    <location>
        <position position="444"/>
    </location>
</feature>
<feature type="sequence conflict" description="In Ref. 2; AAH24832." evidence="8" ref="2">
    <original>V</original>
    <variation>I</variation>
    <location>
        <position position="807"/>
    </location>
</feature>
<feature type="helix" evidence="11">
    <location>
        <begin position="473"/>
        <end position="476"/>
    </location>
</feature>
<proteinExistence type="evidence at protein level"/>
<organism evidence="9">
    <name type="scientific">Mus musculus</name>
    <name type="common">Mouse</name>
    <dbReference type="NCBI Taxonomy" id="10090"/>
    <lineage>
        <taxon>Eukaryota</taxon>
        <taxon>Metazoa</taxon>
        <taxon>Chordata</taxon>
        <taxon>Craniata</taxon>
        <taxon>Vertebrata</taxon>
        <taxon>Euteleostomi</taxon>
        <taxon>Mammalia</taxon>
        <taxon>Eutheria</taxon>
        <taxon>Euarchontoglires</taxon>
        <taxon>Glires</taxon>
        <taxon>Rodentia</taxon>
        <taxon>Myomorpha</taxon>
        <taxon>Muroidea</taxon>
        <taxon>Muridae</taxon>
        <taxon>Murinae</taxon>
        <taxon>Mus</taxon>
        <taxon>Mus</taxon>
    </lineage>
</organism>
<comment type="function">
    <text evidence="2 6 7">Serine/threonine-protein kinase, which plays a role in the response to environmental stress (By similarity). Appears to act upstream of the JUN N-terminal pathway (PubMed:9003777). Activator of the Hippo signaling pathway which plays a pivotal role in organ size control and tumor suppression by restricting proliferation and promoting apoptosis. MAP4Ks act in parallel to and are partially redundant with STK3/MST2 and STK4/MST2 in the phosphorylation and activation of LATS1/2, and establish MAP4Ks as components of the expanded Hippo pathway (By similarity). May play a role in hematopoietic lineage decisions and growth regulation (PubMed:9003777). Together with CLNK, it enhances CD3-triggered activation of T-cells and subsequent IL2 production (PubMed:11509653).</text>
</comment>
<comment type="catalytic activity">
    <reaction evidence="6 7">
        <text>L-seryl-[protein] + ATP = O-phospho-L-seryl-[protein] + ADP + H(+)</text>
        <dbReference type="Rhea" id="RHEA:17989"/>
        <dbReference type="Rhea" id="RHEA-COMP:9863"/>
        <dbReference type="Rhea" id="RHEA-COMP:11604"/>
        <dbReference type="ChEBI" id="CHEBI:15378"/>
        <dbReference type="ChEBI" id="CHEBI:29999"/>
        <dbReference type="ChEBI" id="CHEBI:30616"/>
        <dbReference type="ChEBI" id="CHEBI:83421"/>
        <dbReference type="ChEBI" id="CHEBI:456216"/>
        <dbReference type="EC" id="2.7.11.1"/>
    </reaction>
</comment>
<comment type="catalytic activity">
    <reaction evidence="6 7">
        <text>L-threonyl-[protein] + ATP = O-phospho-L-threonyl-[protein] + ADP + H(+)</text>
        <dbReference type="Rhea" id="RHEA:46608"/>
        <dbReference type="Rhea" id="RHEA-COMP:11060"/>
        <dbReference type="Rhea" id="RHEA-COMP:11605"/>
        <dbReference type="ChEBI" id="CHEBI:15378"/>
        <dbReference type="ChEBI" id="CHEBI:30013"/>
        <dbReference type="ChEBI" id="CHEBI:30616"/>
        <dbReference type="ChEBI" id="CHEBI:61977"/>
        <dbReference type="ChEBI" id="CHEBI:456216"/>
        <dbReference type="EC" id="2.7.11.1"/>
    </reaction>
</comment>
<comment type="cofactor">
    <cofactor evidence="7">
        <name>Mg(2+)</name>
        <dbReference type="ChEBI" id="CHEBI:18420"/>
    </cofactor>
</comment>
<comment type="subunit">
    <text evidence="2 6">Interacts with MAP3K1 (By similarity). Interacts with FBXW8 (By similarity). Interacts with CLNK (via its SH2 domain) (PubMed:11509653).</text>
</comment>
<comment type="interaction">
    <interactant intactId="EBI-2906801">
        <id>P70218</id>
    </interactant>
    <interactant intactId="EBI-7006141">
        <id>Q9BXL7</id>
        <label>CARD11</label>
    </interactant>
    <organismsDiffer>true</organismsDiffer>
    <experiments>2</experiments>
</comment>
<comment type="interaction">
    <interactant intactId="EBI-2906801">
        <id>P70218</id>
    </interactant>
    <interactant intactId="EBI-49961">
        <id>Q16584</id>
        <label>MAP3K11</label>
    </interactant>
    <organismsDiffer>true</organismsDiffer>
    <experiments>3</experiments>
</comment>
<comment type="tissue specificity">
    <text evidence="6 7">Expressed in hemopoietic cells (at protein level) (PubMed:11509653). Ubiquitously expressed in all tissues examined at embryonic stage 16.5 dpc with high levels in lung, heart and fetal liver. In the neonate, expression is restricted to the tissues which undergo lineage decisions, lung, thymus, liver, kidney and brain. In the adult, expression is limited to hemopoietic organs, thymus, bone marrow, and spleen and to the testis (PubMed:9003777).</text>
</comment>
<comment type="PTM">
    <text evidence="7">Autophosphorylates: phosphorylation promotes ubiquitination by the Cul7-RING(FBXW8) ubiquitin-protein ligase complex, leading to its degradation by the proteasome.</text>
</comment>
<comment type="PTM">
    <text evidence="6">Tyrosine-phosphorylated after activation of hemopoietic cells.</text>
</comment>
<comment type="PTM">
    <text evidence="1">Ubiquitinated by the Cul7-RING(FBXW8) ubiquitin-protein ligase complex following autophosphorylation, leading to its degradation by the proteasome.</text>
</comment>
<comment type="similarity">
    <text evidence="8">Belongs to the protein kinase superfamily. STE Ser/Thr protein kinase family. STE20 subfamily.</text>
</comment>
<comment type="sequence caution" evidence="8">
    <conflict type="miscellaneous discrepancy">
        <sequence resource="EMBL-CDS" id="AAH05433"/>
    </conflict>
    <text>Intron retention.</text>
</comment>
<keyword id="KW-0002">3D-structure</keyword>
<keyword id="KW-0067">ATP-binding</keyword>
<keyword id="KW-0418">Kinase</keyword>
<keyword id="KW-0547">Nucleotide-binding</keyword>
<keyword id="KW-0597">Phosphoprotein</keyword>
<keyword id="KW-1185">Reference proteome</keyword>
<keyword id="KW-0723">Serine/threonine-protein kinase</keyword>
<keyword id="KW-0808">Transferase</keyword>
<keyword id="KW-0832">Ubl conjugation</keyword>
<gene>
    <name type="primary">Map4k1</name>
    <name type="synonym">Hpk1</name>
</gene>
<sequence length="827" mass="91535">MALVDPDIFNKDPREHYDLLQRLGGGTYGEVFKARDKVSKDLVALKMVKMEPDDDVATLQKEILMLKTCRHANIVAYHGSYLWLQKLWICMEFCGAGSLQDIYQVTGSLSELQISYVCREVLQGLAYLHSEKKIHRDIKGANILINDCGEVKLADFGISAQIGATLARRLSFIGTPYWMAPEVAAVALKGGYNELCDIWSLGITAIELAELQPPLFDVHPLRVLFLMTKSGYQPPRLKEKSRWSSSFHNFVKVTLTKNSKKRPSATKMLSHQLVSQPGLNRGLILDLLDKMKNPGKGLPVDIEDEEPEPPPAIPRRIRSTYRASSLGIPDADCCRRQMEFQRPRCVDCRPQAETVRLYPPAHFGSTSPRSQLSDSDDDYDDVDIPAPSENIPPPLPPKPKFRSPSDDGSGGIRDDGQLSPGVLVRCASGPPPRTPRPGPPPATCSPHLTARSDPSLWNPAAPEPGQPPLVPPRKEKMRGKMENEKRREKYPLLVKLFNGCPLQIHSTAAWTHPSTKDQNLLLGAEEGIFILNRNDQEATLEMIFPGRTTWLYCINNLLMSLSGKTPYLYSHSILGLLERKDGRTGSPIAHISPHRLLARKNMVSSKIQDTKGCRACCVAESASSGGPFLCGALETSVVLLQWYQPMNKFLLVRQVLFPLPTPLPVFTLLTTPGSELPAVCIGVSPGQAAKSVLFHTVRFGALSCWLDDSSTEHKGPVQVIQVKEDMVMVLMDGSLKLVTPEGAPAPGLRTPEIPMTEAVEAVAMVEDRLEAFWKHGVQVWAPGLKQPLQELRDPTLTFRLLCSPRPVVVETRPTDDPTAPSNLYIQE</sequence>
<reference evidence="8" key="1">
    <citation type="journal article" date="1996" name="EMBO J.">
        <title>HPK1, a hematopoietic protein kinase activating the SAPK/JNK pathway.</title>
        <authorList>
            <person name="Kiefer F."/>
            <person name="Tibbles L.A."/>
            <person name="Anafi M."/>
            <person name="Janssen A."/>
            <person name="Zanke B.W."/>
            <person name="Lassam N."/>
            <person name="Pawson T."/>
            <person name="Woodgett J.R."/>
            <person name="Iscove N.N."/>
        </authorList>
    </citation>
    <scope>NUCLEOTIDE SEQUENCE [MRNA]</scope>
    <scope>FUNCTION</scope>
    <scope>CATALYTIC ACTIVITY</scope>
    <scope>TISSUE SPECIFICITY</scope>
    <scope>MUTAGENESIS OF LYS-46</scope>
    <scope>AUTOPHOSPHORYLATION</scope>
    <source>
        <tissue>Pre-B cell</tissue>
    </source>
</reference>
<reference key="2">
    <citation type="journal article" date="2004" name="Genome Res.">
        <title>The status, quality, and expansion of the NIH full-length cDNA project: the Mammalian Gene Collection (MGC).</title>
        <authorList>
            <consortium name="The MGC Project Team"/>
        </authorList>
    </citation>
    <scope>NUCLEOTIDE SEQUENCE [LARGE SCALE MRNA]</scope>
    <source>
        <tissue>Mammary gland</tissue>
    </source>
</reference>
<reference key="3">
    <citation type="journal article" date="2001" name="Mol. Cell. Biol.">
        <title>Synergistic regulation of immunoreceptor signaling by SLP-76-related adaptor Clnk and serine/threonine protein kinase HPK-1.</title>
        <authorList>
            <person name="Yu J."/>
            <person name="Riou C."/>
            <person name="Davidson D."/>
            <person name="Minhas R."/>
            <person name="Robson J.D."/>
            <person name="Julius M."/>
            <person name="Arnold R."/>
            <person name="Kiefer F."/>
            <person name="Veillette A."/>
        </authorList>
    </citation>
    <scope>NUCLEOTIDE SEQUENCE [MRNA] OF 1-439</scope>
    <scope>FUNCTION</scope>
    <scope>CATALYTIC ACTIVITY</scope>
    <scope>INTERACTION WITH CLNK</scope>
    <scope>TISSUE SPECIFICITY</scope>
    <scope>PHOSPHORYLATION</scope>
    <scope>MUTAGENESIS OF LYS-46</scope>
</reference>
<reference key="4">
    <citation type="journal article" date="2010" name="Cell">
        <title>A tissue-specific atlas of mouse protein phosphorylation and expression.</title>
        <authorList>
            <person name="Huttlin E.L."/>
            <person name="Jedrychowski M.P."/>
            <person name="Elias J.E."/>
            <person name="Goswami T."/>
            <person name="Rad R."/>
            <person name="Beausoleil S.A."/>
            <person name="Villen J."/>
            <person name="Haas W."/>
            <person name="Sowa M.E."/>
            <person name="Gygi S.P."/>
        </authorList>
    </citation>
    <scope>PHOSPHORYLATION [LARGE SCALE ANALYSIS] AT SER-373; SER-375 AND SER-419</scope>
    <scope>IDENTIFICATION BY MASS SPECTROMETRY [LARGE SCALE ANALYSIS]</scope>
    <source>
        <tissue>Lung</tissue>
        <tissue>Spleen</tissue>
    </source>
</reference>